<name>ASTB_YERPS</name>
<accession>Q66B18</accession>
<evidence type="ECO:0000255" key="1">
    <source>
        <dbReference type="HAMAP-Rule" id="MF_01172"/>
    </source>
</evidence>
<comment type="function">
    <text evidence="1">Catalyzes the hydrolysis of N(2)-succinylarginine into N(2)-succinylornithine, ammonia and CO(2).</text>
</comment>
<comment type="catalytic activity">
    <reaction evidence="1">
        <text>N(2)-succinyl-L-arginine + 2 H2O + 2 H(+) = N(2)-succinyl-L-ornithine + 2 NH4(+) + CO2</text>
        <dbReference type="Rhea" id="RHEA:19533"/>
        <dbReference type="ChEBI" id="CHEBI:15377"/>
        <dbReference type="ChEBI" id="CHEBI:15378"/>
        <dbReference type="ChEBI" id="CHEBI:16526"/>
        <dbReference type="ChEBI" id="CHEBI:28938"/>
        <dbReference type="ChEBI" id="CHEBI:58241"/>
        <dbReference type="ChEBI" id="CHEBI:58514"/>
        <dbReference type="EC" id="3.5.3.23"/>
    </reaction>
</comment>
<comment type="pathway">
    <text evidence="1">Amino-acid degradation; L-arginine degradation via AST pathway; L-glutamate and succinate from L-arginine: step 2/5.</text>
</comment>
<comment type="subunit">
    <text evidence="1">Homodimer.</text>
</comment>
<comment type="similarity">
    <text evidence="1">Belongs to the succinylarginine dihydrolase family.</text>
</comment>
<protein>
    <recommendedName>
        <fullName evidence="1">N-succinylarginine dihydrolase</fullName>
        <ecNumber evidence="1">3.5.3.23</ecNumber>
    </recommendedName>
</protein>
<keyword id="KW-0056">Arginine metabolism</keyword>
<keyword id="KW-0378">Hydrolase</keyword>
<sequence length="447" mass="49234">MAGYEVNFDGLVGLTHHYAGLSFGNEASTTHQNRTSNPRLAAKQGLLKMKALADLGYKQGVLPPQERPAIGVLRKLGFSGSDEQVLSDVARNAPRLLSAVSSASSMWTANAATVSPSADSADGRVHFTVANLHNKFHRAIEAETTAVLLPAVFNNHRHFVHHDALPSVTLLGDEGAANHNRLGGEYDSPAIQMFVYGRQGMESGAVPGRYPARQTREASQAVARLHQLDPKRTVFVQQNPAVIDQGVFHNDVIAVSNRNVLFHHELAFLSSTQVMDDIRCKMAGLEQQLVNIEVPEAEVSVADAVSTYLFNSQLLHKANGKMLLVIPQESQDNPSVWRYLSELVSGDGPIDELRVFDLRESMRNGGGPACLRLRVVLNDAELQAVNSRVMLTPALFVTLNNWVDQHYRDHLQFKDLADPHLLQEGRQALDELTRILNLGPVYPFQRN</sequence>
<feature type="chain" id="PRO_0000262384" description="N-succinylarginine dihydrolase">
    <location>
        <begin position="1"/>
        <end position="447"/>
    </location>
</feature>
<feature type="active site" evidence="1">
    <location>
        <position position="174"/>
    </location>
</feature>
<feature type="active site" evidence="1">
    <location>
        <position position="249"/>
    </location>
</feature>
<feature type="active site" description="Nucleophile" evidence="1">
    <location>
        <position position="370"/>
    </location>
</feature>
<feature type="binding site" evidence="1">
    <location>
        <begin position="19"/>
        <end position="28"/>
    </location>
    <ligand>
        <name>substrate</name>
    </ligand>
</feature>
<feature type="binding site" evidence="1">
    <location>
        <position position="110"/>
    </location>
    <ligand>
        <name>substrate</name>
    </ligand>
</feature>
<feature type="binding site" evidence="1">
    <location>
        <begin position="137"/>
        <end position="138"/>
    </location>
    <ligand>
        <name>substrate</name>
    </ligand>
</feature>
<feature type="binding site" evidence="1">
    <location>
        <position position="213"/>
    </location>
    <ligand>
        <name>substrate</name>
    </ligand>
</feature>
<feature type="binding site" evidence="1">
    <location>
        <position position="251"/>
    </location>
    <ligand>
        <name>substrate</name>
    </ligand>
</feature>
<feature type="binding site" evidence="1">
    <location>
        <position position="364"/>
    </location>
    <ligand>
        <name>substrate</name>
    </ligand>
</feature>
<gene>
    <name evidence="1" type="primary">astB</name>
    <name type="ordered locus">YPTB1962</name>
</gene>
<reference key="1">
    <citation type="journal article" date="2004" name="Proc. Natl. Acad. Sci. U.S.A.">
        <title>Insights into the evolution of Yersinia pestis through whole-genome comparison with Yersinia pseudotuberculosis.</title>
        <authorList>
            <person name="Chain P.S.G."/>
            <person name="Carniel E."/>
            <person name="Larimer F.W."/>
            <person name="Lamerdin J."/>
            <person name="Stoutland P.O."/>
            <person name="Regala W.M."/>
            <person name="Georgescu A.M."/>
            <person name="Vergez L.M."/>
            <person name="Land M.L."/>
            <person name="Motin V.L."/>
            <person name="Brubaker R.R."/>
            <person name="Fowler J."/>
            <person name="Hinnebusch J."/>
            <person name="Marceau M."/>
            <person name="Medigue C."/>
            <person name="Simonet M."/>
            <person name="Chenal-Francisque V."/>
            <person name="Souza B."/>
            <person name="Dacheux D."/>
            <person name="Elliott J.M."/>
            <person name="Derbise A."/>
            <person name="Hauser L.J."/>
            <person name="Garcia E."/>
        </authorList>
    </citation>
    <scope>NUCLEOTIDE SEQUENCE [LARGE SCALE GENOMIC DNA]</scope>
    <source>
        <strain>IP32953</strain>
    </source>
</reference>
<proteinExistence type="inferred from homology"/>
<organism>
    <name type="scientific">Yersinia pseudotuberculosis serotype I (strain IP32953)</name>
    <dbReference type="NCBI Taxonomy" id="273123"/>
    <lineage>
        <taxon>Bacteria</taxon>
        <taxon>Pseudomonadati</taxon>
        <taxon>Pseudomonadota</taxon>
        <taxon>Gammaproteobacteria</taxon>
        <taxon>Enterobacterales</taxon>
        <taxon>Yersiniaceae</taxon>
        <taxon>Yersinia</taxon>
    </lineage>
</organism>
<dbReference type="EC" id="3.5.3.23" evidence="1"/>
<dbReference type="EMBL" id="BX936398">
    <property type="protein sequence ID" value="CAH21200.1"/>
    <property type="molecule type" value="Genomic_DNA"/>
</dbReference>
<dbReference type="RefSeq" id="WP_002212029.1">
    <property type="nucleotide sequence ID" value="NZ_CP009712.1"/>
</dbReference>
<dbReference type="SMR" id="Q66B18"/>
<dbReference type="GeneID" id="49786049"/>
<dbReference type="KEGG" id="ypo:BZ17_507"/>
<dbReference type="KEGG" id="yps:YPTB1962"/>
<dbReference type="PATRIC" id="fig|273123.14.peg.542"/>
<dbReference type="UniPathway" id="UPA00185">
    <property type="reaction ID" value="UER00280"/>
</dbReference>
<dbReference type="Proteomes" id="UP000001011">
    <property type="component" value="Chromosome"/>
</dbReference>
<dbReference type="GO" id="GO:0009015">
    <property type="term" value="F:N-succinylarginine dihydrolase activity"/>
    <property type="evidence" value="ECO:0007669"/>
    <property type="project" value="UniProtKB-UniRule"/>
</dbReference>
<dbReference type="GO" id="GO:0019544">
    <property type="term" value="P:arginine catabolic process to glutamate"/>
    <property type="evidence" value="ECO:0007669"/>
    <property type="project" value="UniProtKB-UniRule"/>
</dbReference>
<dbReference type="GO" id="GO:0019545">
    <property type="term" value="P:arginine catabolic process to succinate"/>
    <property type="evidence" value="ECO:0007669"/>
    <property type="project" value="UniProtKB-UniRule"/>
</dbReference>
<dbReference type="Gene3D" id="3.75.10.20">
    <property type="entry name" value="Succinylarginine dihydrolase"/>
    <property type="match status" value="1"/>
</dbReference>
<dbReference type="HAMAP" id="MF_01172">
    <property type="entry name" value="AstB"/>
    <property type="match status" value="1"/>
</dbReference>
<dbReference type="InterPro" id="IPR037031">
    <property type="entry name" value="AstB_sf"/>
</dbReference>
<dbReference type="InterPro" id="IPR007079">
    <property type="entry name" value="SuccinylArg_d-Hdrlase_AstB"/>
</dbReference>
<dbReference type="NCBIfam" id="TIGR03241">
    <property type="entry name" value="arg_catab_astB"/>
    <property type="match status" value="1"/>
</dbReference>
<dbReference type="NCBIfam" id="NF009789">
    <property type="entry name" value="PRK13281.1"/>
    <property type="match status" value="1"/>
</dbReference>
<dbReference type="PANTHER" id="PTHR30420">
    <property type="entry name" value="N-SUCCINYLARGININE DIHYDROLASE"/>
    <property type="match status" value="1"/>
</dbReference>
<dbReference type="PANTHER" id="PTHR30420:SF2">
    <property type="entry name" value="N-SUCCINYLARGININE DIHYDROLASE"/>
    <property type="match status" value="1"/>
</dbReference>
<dbReference type="Pfam" id="PF04996">
    <property type="entry name" value="AstB"/>
    <property type="match status" value="1"/>
</dbReference>
<dbReference type="SUPFAM" id="SSF55909">
    <property type="entry name" value="Pentein"/>
    <property type="match status" value="1"/>
</dbReference>